<reference key="1">
    <citation type="journal article" date="2008" name="Chem. Biol. Interact.">
        <title>Extending the Bacillus cereus group genomics to putative food-borne pathogens of different toxicity.</title>
        <authorList>
            <person name="Lapidus A."/>
            <person name="Goltsman E."/>
            <person name="Auger S."/>
            <person name="Galleron N."/>
            <person name="Segurens B."/>
            <person name="Dossat C."/>
            <person name="Land M.L."/>
            <person name="Broussolle V."/>
            <person name="Brillard J."/>
            <person name="Guinebretiere M.-H."/>
            <person name="Sanchis V."/>
            <person name="Nguen-the C."/>
            <person name="Lereclus D."/>
            <person name="Richardson P."/>
            <person name="Wincker P."/>
            <person name="Weissenbach J."/>
            <person name="Ehrlich S.D."/>
            <person name="Sorokin A."/>
        </authorList>
    </citation>
    <scope>NUCLEOTIDE SEQUENCE [LARGE SCALE GENOMIC DNA]</scope>
    <source>
        <strain>KBAB4</strain>
    </source>
</reference>
<organism>
    <name type="scientific">Bacillus mycoides (strain KBAB4)</name>
    <name type="common">Bacillus weihenstephanensis</name>
    <dbReference type="NCBI Taxonomy" id="315730"/>
    <lineage>
        <taxon>Bacteria</taxon>
        <taxon>Bacillati</taxon>
        <taxon>Bacillota</taxon>
        <taxon>Bacilli</taxon>
        <taxon>Bacillales</taxon>
        <taxon>Bacillaceae</taxon>
        <taxon>Bacillus</taxon>
        <taxon>Bacillus cereus group</taxon>
    </lineage>
</organism>
<protein>
    <recommendedName>
        <fullName evidence="1">Ferredoxin--NADP reductase 1</fullName>
        <shortName evidence="1">FNR 1</shortName>
        <shortName evidence="1">Fd-NADP(+) reductase 1</shortName>
        <ecNumber evidence="1">1.18.1.2</ecNumber>
    </recommendedName>
</protein>
<feature type="chain" id="PRO_0000364806" description="Ferredoxin--NADP reductase 1">
    <location>
        <begin position="1"/>
        <end position="349"/>
    </location>
</feature>
<feature type="binding site" evidence="1">
    <location>
        <position position="36"/>
    </location>
    <ligand>
        <name>FAD</name>
        <dbReference type="ChEBI" id="CHEBI:57692"/>
    </ligand>
</feature>
<feature type="binding site" evidence="1">
    <location>
        <position position="44"/>
    </location>
    <ligand>
        <name>FAD</name>
        <dbReference type="ChEBI" id="CHEBI:57692"/>
    </ligand>
</feature>
<feature type="binding site" evidence="1">
    <location>
        <position position="48"/>
    </location>
    <ligand>
        <name>FAD</name>
        <dbReference type="ChEBI" id="CHEBI:57692"/>
    </ligand>
</feature>
<feature type="binding site" evidence="1">
    <location>
        <position position="88"/>
    </location>
    <ligand>
        <name>FAD</name>
        <dbReference type="ChEBI" id="CHEBI:57692"/>
    </ligand>
</feature>
<feature type="binding site" evidence="1">
    <location>
        <position position="123"/>
    </location>
    <ligand>
        <name>FAD</name>
        <dbReference type="ChEBI" id="CHEBI:57692"/>
    </ligand>
</feature>
<feature type="binding site" evidence="1">
    <location>
        <position position="290"/>
    </location>
    <ligand>
        <name>FAD</name>
        <dbReference type="ChEBI" id="CHEBI:57692"/>
    </ligand>
</feature>
<feature type="binding site" evidence="1">
    <location>
        <position position="331"/>
    </location>
    <ligand>
        <name>FAD</name>
        <dbReference type="ChEBI" id="CHEBI:57692"/>
    </ligand>
</feature>
<name>FENR1_BACMK</name>
<dbReference type="EC" id="1.18.1.2" evidence="1"/>
<dbReference type="EMBL" id="CP000903">
    <property type="protein sequence ID" value="ABY41598.1"/>
    <property type="molecule type" value="Genomic_DNA"/>
</dbReference>
<dbReference type="RefSeq" id="WP_002091284.1">
    <property type="nucleotide sequence ID" value="NC_010184.1"/>
</dbReference>
<dbReference type="SMR" id="A9VRK8"/>
<dbReference type="KEGG" id="bwe:BcerKBAB4_0332"/>
<dbReference type="eggNOG" id="COG0492">
    <property type="taxonomic scope" value="Bacteria"/>
</dbReference>
<dbReference type="HOGENOM" id="CLU_031864_5_5_9"/>
<dbReference type="Proteomes" id="UP000002154">
    <property type="component" value="Chromosome"/>
</dbReference>
<dbReference type="GO" id="GO:0004324">
    <property type="term" value="F:ferredoxin-NADP+ reductase activity"/>
    <property type="evidence" value="ECO:0007669"/>
    <property type="project" value="UniProtKB-UniRule"/>
</dbReference>
<dbReference type="GO" id="GO:0050660">
    <property type="term" value="F:flavin adenine dinucleotide binding"/>
    <property type="evidence" value="ECO:0007669"/>
    <property type="project" value="UniProtKB-UniRule"/>
</dbReference>
<dbReference type="GO" id="GO:0050661">
    <property type="term" value="F:NADP binding"/>
    <property type="evidence" value="ECO:0007669"/>
    <property type="project" value="UniProtKB-UniRule"/>
</dbReference>
<dbReference type="Gene3D" id="3.50.50.60">
    <property type="entry name" value="FAD/NAD(P)-binding domain"/>
    <property type="match status" value="2"/>
</dbReference>
<dbReference type="HAMAP" id="MF_01685">
    <property type="entry name" value="FENR2"/>
    <property type="match status" value="1"/>
</dbReference>
<dbReference type="InterPro" id="IPR036188">
    <property type="entry name" value="FAD/NAD-bd_sf"/>
</dbReference>
<dbReference type="InterPro" id="IPR023753">
    <property type="entry name" value="FAD/NAD-binding_dom"/>
</dbReference>
<dbReference type="InterPro" id="IPR022890">
    <property type="entry name" value="Fd--NADP_Rdtase_type_2"/>
</dbReference>
<dbReference type="InterPro" id="IPR050097">
    <property type="entry name" value="Ferredoxin-NADP_redctase_2"/>
</dbReference>
<dbReference type="PANTHER" id="PTHR48105">
    <property type="entry name" value="THIOREDOXIN REDUCTASE 1-RELATED-RELATED"/>
    <property type="match status" value="1"/>
</dbReference>
<dbReference type="Pfam" id="PF07992">
    <property type="entry name" value="Pyr_redox_2"/>
    <property type="match status" value="1"/>
</dbReference>
<dbReference type="PRINTS" id="PR00368">
    <property type="entry name" value="FADPNR"/>
</dbReference>
<dbReference type="PRINTS" id="PR00469">
    <property type="entry name" value="PNDRDTASEII"/>
</dbReference>
<dbReference type="SUPFAM" id="SSF51905">
    <property type="entry name" value="FAD/NAD(P)-binding domain"/>
    <property type="match status" value="1"/>
</dbReference>
<evidence type="ECO:0000255" key="1">
    <source>
        <dbReference type="HAMAP-Rule" id="MF_01685"/>
    </source>
</evidence>
<sequence>MNQEELFDVTVIGGGPAGLYSAFYSGLREMKTKIIEFQPQLGGKIHVYPEKMIWDIGGLLPVTGEKLIEQLVQQGLTFQPEVVLNTKIESIIRNQDGIFTLKTSSGEEHFSKTVIVATGSGILNPQKLSIEGAERFEVSNLNYTVKSLKRFKDKTVIISGGGNSAIDWANELEPIAKKVYLTYRKEELSGHEAQVKQLMNSSAECFFNTSITKLIAGDNHEAIEYVELTNHETGEVSHLSIDEVIINHGYERDITLLENSELDVAIVDNYYIAGNANSESSVDGLYAAGDILKHDGKLHLIAGAFQDAGNAVNKAKQFIQPDASEYGMVSSHNEVFKKRNRELIKQMMK</sequence>
<comment type="catalytic activity">
    <reaction evidence="1">
        <text>2 reduced [2Fe-2S]-[ferredoxin] + NADP(+) + H(+) = 2 oxidized [2Fe-2S]-[ferredoxin] + NADPH</text>
        <dbReference type="Rhea" id="RHEA:20125"/>
        <dbReference type="Rhea" id="RHEA-COMP:10000"/>
        <dbReference type="Rhea" id="RHEA-COMP:10001"/>
        <dbReference type="ChEBI" id="CHEBI:15378"/>
        <dbReference type="ChEBI" id="CHEBI:33737"/>
        <dbReference type="ChEBI" id="CHEBI:33738"/>
        <dbReference type="ChEBI" id="CHEBI:57783"/>
        <dbReference type="ChEBI" id="CHEBI:58349"/>
        <dbReference type="EC" id="1.18.1.2"/>
    </reaction>
</comment>
<comment type="cofactor">
    <cofactor evidence="1">
        <name>FAD</name>
        <dbReference type="ChEBI" id="CHEBI:57692"/>
    </cofactor>
    <text evidence="1">Binds 1 FAD per subunit.</text>
</comment>
<comment type="subunit">
    <text evidence="1">Homodimer.</text>
</comment>
<comment type="similarity">
    <text evidence="1">Belongs to the ferredoxin--NADP reductase type 2 family.</text>
</comment>
<keyword id="KW-0274">FAD</keyword>
<keyword id="KW-0285">Flavoprotein</keyword>
<keyword id="KW-0521">NADP</keyword>
<keyword id="KW-0560">Oxidoreductase</keyword>
<proteinExistence type="inferred from homology"/>
<gene>
    <name type="ordered locus">BcerKBAB4_0332</name>
</gene>
<accession>A9VRK8</accession>